<keyword id="KW-1003">Cell membrane</keyword>
<keyword id="KW-0285">Flavoprotein</keyword>
<keyword id="KW-0288">FMN</keyword>
<keyword id="KW-0472">Membrane</keyword>
<keyword id="KW-0560">Oxidoreductase</keyword>
<keyword id="KW-0665">Pyrimidine biosynthesis</keyword>
<keyword id="KW-1185">Reference proteome</keyword>
<feature type="chain" id="PRO_1000195082" description="Dihydroorotate dehydrogenase (quinone)">
    <location>
        <begin position="1"/>
        <end position="353"/>
    </location>
</feature>
<feature type="active site" description="Nucleophile" evidence="1">
    <location>
        <position position="180"/>
    </location>
</feature>
<feature type="binding site" evidence="1">
    <location>
        <begin position="67"/>
        <end position="71"/>
    </location>
    <ligand>
        <name>FMN</name>
        <dbReference type="ChEBI" id="CHEBI:58210"/>
    </ligand>
</feature>
<feature type="binding site" evidence="1">
    <location>
        <position position="71"/>
    </location>
    <ligand>
        <name>substrate</name>
    </ligand>
</feature>
<feature type="binding site" evidence="1">
    <location>
        <position position="91"/>
    </location>
    <ligand>
        <name>FMN</name>
        <dbReference type="ChEBI" id="CHEBI:58210"/>
    </ligand>
</feature>
<feature type="binding site" evidence="1">
    <location>
        <begin position="116"/>
        <end position="120"/>
    </location>
    <ligand>
        <name>substrate</name>
    </ligand>
</feature>
<feature type="binding site" evidence="1">
    <location>
        <position position="144"/>
    </location>
    <ligand>
        <name>FMN</name>
        <dbReference type="ChEBI" id="CHEBI:58210"/>
    </ligand>
</feature>
<feature type="binding site" evidence="1">
    <location>
        <position position="177"/>
    </location>
    <ligand>
        <name>FMN</name>
        <dbReference type="ChEBI" id="CHEBI:58210"/>
    </ligand>
</feature>
<feature type="binding site" evidence="1">
    <location>
        <position position="177"/>
    </location>
    <ligand>
        <name>substrate</name>
    </ligand>
</feature>
<feature type="binding site" evidence="1">
    <location>
        <position position="182"/>
    </location>
    <ligand>
        <name>substrate</name>
    </ligand>
</feature>
<feature type="binding site" evidence="1">
    <location>
        <position position="213"/>
    </location>
    <ligand>
        <name>FMN</name>
        <dbReference type="ChEBI" id="CHEBI:58210"/>
    </ligand>
</feature>
<feature type="binding site" evidence="1">
    <location>
        <position position="241"/>
    </location>
    <ligand>
        <name>FMN</name>
        <dbReference type="ChEBI" id="CHEBI:58210"/>
    </ligand>
</feature>
<feature type="binding site" evidence="1">
    <location>
        <begin position="242"/>
        <end position="243"/>
    </location>
    <ligand>
        <name>substrate</name>
    </ligand>
</feature>
<feature type="binding site" evidence="1">
    <location>
        <position position="265"/>
    </location>
    <ligand>
        <name>FMN</name>
        <dbReference type="ChEBI" id="CHEBI:58210"/>
    </ligand>
</feature>
<feature type="binding site" evidence="1">
    <location>
        <position position="294"/>
    </location>
    <ligand>
        <name>FMN</name>
        <dbReference type="ChEBI" id="CHEBI:58210"/>
    </ligand>
</feature>
<feature type="binding site" evidence="1">
    <location>
        <begin position="315"/>
        <end position="316"/>
    </location>
    <ligand>
        <name>FMN</name>
        <dbReference type="ChEBI" id="CHEBI:58210"/>
    </ligand>
</feature>
<protein>
    <recommendedName>
        <fullName evidence="1">Dihydroorotate dehydrogenase (quinone)</fullName>
        <ecNumber evidence="1">1.3.5.2</ecNumber>
    </recommendedName>
    <alternativeName>
        <fullName evidence="1">DHOdehase</fullName>
        <shortName evidence="1">DHOD</shortName>
        <shortName evidence="1">DHODase</shortName>
    </alternativeName>
    <alternativeName>
        <fullName evidence="1">Dihydroorotate oxidase</fullName>
    </alternativeName>
</protein>
<sequence length="353" mass="37211">MLYQILLRLFFLVSPERVHTLVFAALRAIAAFTPTRWLLNRLCAPTDPILGTEVFGVHFPAPLGLAAGFDKDGEGLKVWGPLGFGYAEVGTVTAIAQPGNPKPRLFRLPADRGLLNRMGFNNHGAAALAPRLATRTSTVPIGANIGKSKIVEPAFASSDYRVSARQVGPAADFLVVNVSSPNTPGLRDLQAIGELRKILSAVLEETTAPVLVKIAPDLSDADIDEIADLAVELGLAGIVATNTTISRAALKTTGVEDLGAGGVSGPPVAARSLEVLRRLYRRVGDRLVLISVGGIEDADDAWARIIAGASLLQGYTGFIYRGGFYAKRIHDGIAQRLRAGGFASLQDAVGSAT</sequence>
<evidence type="ECO:0000255" key="1">
    <source>
        <dbReference type="HAMAP-Rule" id="MF_00225"/>
    </source>
</evidence>
<dbReference type="EC" id="1.3.5.2" evidence="1"/>
<dbReference type="EMBL" id="CU458896">
    <property type="protein sequence ID" value="CAM62185.1"/>
    <property type="molecule type" value="Genomic_DNA"/>
</dbReference>
<dbReference type="RefSeq" id="WP_005110633.1">
    <property type="nucleotide sequence ID" value="NZ_MLCG01000002.1"/>
</dbReference>
<dbReference type="SMR" id="B1MPD4"/>
<dbReference type="GeneID" id="93379040"/>
<dbReference type="KEGG" id="mab:MAB_2104c"/>
<dbReference type="UniPathway" id="UPA00070">
    <property type="reaction ID" value="UER00946"/>
</dbReference>
<dbReference type="Proteomes" id="UP000007137">
    <property type="component" value="Chromosome"/>
</dbReference>
<dbReference type="GO" id="GO:0005737">
    <property type="term" value="C:cytoplasm"/>
    <property type="evidence" value="ECO:0007669"/>
    <property type="project" value="InterPro"/>
</dbReference>
<dbReference type="GO" id="GO:0005886">
    <property type="term" value="C:plasma membrane"/>
    <property type="evidence" value="ECO:0007669"/>
    <property type="project" value="UniProtKB-SubCell"/>
</dbReference>
<dbReference type="GO" id="GO:0106430">
    <property type="term" value="F:dihydroorotate dehydrogenase (quinone) activity"/>
    <property type="evidence" value="ECO:0007669"/>
    <property type="project" value="UniProtKB-EC"/>
</dbReference>
<dbReference type="GO" id="GO:0006207">
    <property type="term" value="P:'de novo' pyrimidine nucleobase biosynthetic process"/>
    <property type="evidence" value="ECO:0007669"/>
    <property type="project" value="InterPro"/>
</dbReference>
<dbReference type="GO" id="GO:0044205">
    <property type="term" value="P:'de novo' UMP biosynthetic process"/>
    <property type="evidence" value="ECO:0007669"/>
    <property type="project" value="UniProtKB-UniRule"/>
</dbReference>
<dbReference type="CDD" id="cd04738">
    <property type="entry name" value="DHOD_2_like"/>
    <property type="match status" value="1"/>
</dbReference>
<dbReference type="FunFam" id="3.20.20.70:FF:000123">
    <property type="entry name" value="Dihydroorotate dehydrogenase (quinone)"/>
    <property type="match status" value="1"/>
</dbReference>
<dbReference type="Gene3D" id="3.20.20.70">
    <property type="entry name" value="Aldolase class I"/>
    <property type="match status" value="1"/>
</dbReference>
<dbReference type="HAMAP" id="MF_00225">
    <property type="entry name" value="DHO_dh_type2"/>
    <property type="match status" value="1"/>
</dbReference>
<dbReference type="InterPro" id="IPR013785">
    <property type="entry name" value="Aldolase_TIM"/>
</dbReference>
<dbReference type="InterPro" id="IPR050074">
    <property type="entry name" value="DHO_dehydrogenase"/>
</dbReference>
<dbReference type="InterPro" id="IPR012135">
    <property type="entry name" value="Dihydroorotate_DH_1_2"/>
</dbReference>
<dbReference type="InterPro" id="IPR005719">
    <property type="entry name" value="Dihydroorotate_DH_2"/>
</dbReference>
<dbReference type="InterPro" id="IPR005720">
    <property type="entry name" value="Dihydroorotate_DH_cat"/>
</dbReference>
<dbReference type="InterPro" id="IPR001295">
    <property type="entry name" value="Dihydroorotate_DH_CS"/>
</dbReference>
<dbReference type="NCBIfam" id="NF003648">
    <property type="entry name" value="PRK05286.2-1"/>
    <property type="match status" value="1"/>
</dbReference>
<dbReference type="NCBIfam" id="NF003652">
    <property type="entry name" value="PRK05286.2-5"/>
    <property type="match status" value="1"/>
</dbReference>
<dbReference type="NCBIfam" id="TIGR01036">
    <property type="entry name" value="pyrD_sub2"/>
    <property type="match status" value="1"/>
</dbReference>
<dbReference type="PANTHER" id="PTHR48109:SF4">
    <property type="entry name" value="DIHYDROOROTATE DEHYDROGENASE (QUINONE), MITOCHONDRIAL"/>
    <property type="match status" value="1"/>
</dbReference>
<dbReference type="PANTHER" id="PTHR48109">
    <property type="entry name" value="DIHYDROOROTATE DEHYDROGENASE (QUINONE), MITOCHONDRIAL-RELATED"/>
    <property type="match status" value="1"/>
</dbReference>
<dbReference type="Pfam" id="PF01180">
    <property type="entry name" value="DHO_dh"/>
    <property type="match status" value="1"/>
</dbReference>
<dbReference type="PIRSF" id="PIRSF000164">
    <property type="entry name" value="DHO_oxidase"/>
    <property type="match status" value="1"/>
</dbReference>
<dbReference type="SUPFAM" id="SSF51395">
    <property type="entry name" value="FMN-linked oxidoreductases"/>
    <property type="match status" value="1"/>
</dbReference>
<dbReference type="PROSITE" id="PS00911">
    <property type="entry name" value="DHODEHASE_1"/>
    <property type="match status" value="1"/>
</dbReference>
<dbReference type="PROSITE" id="PS00912">
    <property type="entry name" value="DHODEHASE_2"/>
    <property type="match status" value="1"/>
</dbReference>
<name>PYRD_MYCA9</name>
<comment type="function">
    <text evidence="1">Catalyzes the conversion of dihydroorotate to orotate with quinone as electron acceptor.</text>
</comment>
<comment type="catalytic activity">
    <reaction evidence="1">
        <text>(S)-dihydroorotate + a quinone = orotate + a quinol</text>
        <dbReference type="Rhea" id="RHEA:30187"/>
        <dbReference type="ChEBI" id="CHEBI:24646"/>
        <dbReference type="ChEBI" id="CHEBI:30839"/>
        <dbReference type="ChEBI" id="CHEBI:30864"/>
        <dbReference type="ChEBI" id="CHEBI:132124"/>
        <dbReference type="EC" id="1.3.5.2"/>
    </reaction>
</comment>
<comment type="cofactor">
    <cofactor evidence="1">
        <name>FMN</name>
        <dbReference type="ChEBI" id="CHEBI:58210"/>
    </cofactor>
    <text evidence="1">Binds 1 FMN per subunit.</text>
</comment>
<comment type="pathway">
    <text evidence="1">Pyrimidine metabolism; UMP biosynthesis via de novo pathway; orotate from (S)-dihydroorotate (quinone route): step 1/1.</text>
</comment>
<comment type="subunit">
    <text evidence="1">Monomer.</text>
</comment>
<comment type="subcellular location">
    <subcellularLocation>
        <location evidence="1">Cell membrane</location>
        <topology evidence="1">Peripheral membrane protein</topology>
    </subcellularLocation>
</comment>
<comment type="similarity">
    <text evidence="1">Belongs to the dihydroorotate dehydrogenase family. Type 2 subfamily.</text>
</comment>
<reference key="1">
    <citation type="journal article" date="2009" name="PLoS ONE">
        <title>Non mycobacterial virulence genes in the genome of the emerging pathogen Mycobacterium abscessus.</title>
        <authorList>
            <person name="Ripoll F."/>
            <person name="Pasek S."/>
            <person name="Schenowitz C."/>
            <person name="Dossat C."/>
            <person name="Barbe V."/>
            <person name="Rottman M."/>
            <person name="Macheras E."/>
            <person name="Heym B."/>
            <person name="Herrmann J.L."/>
            <person name="Daffe M."/>
            <person name="Brosch R."/>
            <person name="Risler J.L."/>
            <person name="Gaillard J.L."/>
        </authorList>
    </citation>
    <scope>NUCLEOTIDE SEQUENCE [LARGE SCALE GENOMIC DNA]</scope>
    <source>
        <strain>ATCC 19977 / DSM 44196 / CCUG 20993 / CIP 104536 / JCM 13569 / NCTC 13031 / TMC 1543 / L948</strain>
    </source>
</reference>
<proteinExistence type="inferred from homology"/>
<accession>B1MPD4</accession>
<gene>
    <name evidence="1" type="primary">pyrD</name>
    <name type="ordered locus">MAB_2104c</name>
</gene>
<organism>
    <name type="scientific">Mycobacteroides abscessus (strain ATCC 19977 / DSM 44196 / CCUG 20993 / CIP 104536 / JCM 13569 / NCTC 13031 / TMC 1543 / L948)</name>
    <name type="common">Mycobacterium abscessus</name>
    <dbReference type="NCBI Taxonomy" id="561007"/>
    <lineage>
        <taxon>Bacteria</taxon>
        <taxon>Bacillati</taxon>
        <taxon>Actinomycetota</taxon>
        <taxon>Actinomycetes</taxon>
        <taxon>Mycobacteriales</taxon>
        <taxon>Mycobacteriaceae</taxon>
        <taxon>Mycobacteroides</taxon>
        <taxon>Mycobacteroides abscessus</taxon>
    </lineage>
</organism>